<comment type="function">
    <text evidence="1">Catalyzes the oxidation of 5,10-methylenetetrahydrofolate to 5,10-methenyltetrahydrofolate and then the hydrolysis of 5,10-methenyltetrahydrofolate to 10-formyltetrahydrofolate.</text>
</comment>
<comment type="catalytic activity">
    <reaction evidence="1">
        <text>(6R)-5,10-methylene-5,6,7,8-tetrahydrofolate + NADP(+) = (6R)-5,10-methenyltetrahydrofolate + NADPH</text>
        <dbReference type="Rhea" id="RHEA:22812"/>
        <dbReference type="ChEBI" id="CHEBI:15636"/>
        <dbReference type="ChEBI" id="CHEBI:57455"/>
        <dbReference type="ChEBI" id="CHEBI:57783"/>
        <dbReference type="ChEBI" id="CHEBI:58349"/>
        <dbReference type="EC" id="1.5.1.5"/>
    </reaction>
</comment>
<comment type="catalytic activity">
    <reaction evidence="1">
        <text>(6R)-5,10-methenyltetrahydrofolate + H2O = (6R)-10-formyltetrahydrofolate + H(+)</text>
        <dbReference type="Rhea" id="RHEA:23700"/>
        <dbReference type="ChEBI" id="CHEBI:15377"/>
        <dbReference type="ChEBI" id="CHEBI:15378"/>
        <dbReference type="ChEBI" id="CHEBI:57455"/>
        <dbReference type="ChEBI" id="CHEBI:195366"/>
        <dbReference type="EC" id="3.5.4.9"/>
    </reaction>
</comment>
<comment type="pathway">
    <text evidence="1">One-carbon metabolism; tetrahydrofolate interconversion.</text>
</comment>
<comment type="subunit">
    <text evidence="1">Homodimer.</text>
</comment>
<comment type="similarity">
    <text evidence="1">Belongs to the tetrahydrofolate dehydrogenase/cyclohydrolase family.</text>
</comment>
<feature type="chain" id="PRO_1000196781" description="Bifunctional protein FolD">
    <location>
        <begin position="1"/>
        <end position="282"/>
    </location>
</feature>
<feature type="binding site" evidence="1">
    <location>
        <begin position="165"/>
        <end position="167"/>
    </location>
    <ligand>
        <name>NADP(+)</name>
        <dbReference type="ChEBI" id="CHEBI:58349"/>
    </ligand>
</feature>
<feature type="binding site" evidence="1">
    <location>
        <position position="231"/>
    </location>
    <ligand>
        <name>NADP(+)</name>
        <dbReference type="ChEBI" id="CHEBI:58349"/>
    </ligand>
</feature>
<protein>
    <recommendedName>
        <fullName evidence="1">Bifunctional protein FolD</fullName>
    </recommendedName>
    <domain>
        <recommendedName>
            <fullName evidence="1">Methylenetetrahydrofolate dehydrogenase</fullName>
            <ecNumber evidence="1">1.5.1.5</ecNumber>
        </recommendedName>
    </domain>
    <domain>
        <recommendedName>
            <fullName evidence="1">Methenyltetrahydrofolate cyclohydrolase</fullName>
            <ecNumber evidence="1">3.5.4.9</ecNumber>
        </recommendedName>
    </domain>
</protein>
<keyword id="KW-0028">Amino-acid biosynthesis</keyword>
<keyword id="KW-0368">Histidine biosynthesis</keyword>
<keyword id="KW-0378">Hydrolase</keyword>
<keyword id="KW-0486">Methionine biosynthesis</keyword>
<keyword id="KW-0511">Multifunctional enzyme</keyword>
<keyword id="KW-0521">NADP</keyword>
<keyword id="KW-0554">One-carbon metabolism</keyword>
<keyword id="KW-0560">Oxidoreductase</keyword>
<keyword id="KW-0658">Purine biosynthesis</keyword>
<gene>
    <name evidence="1" type="primary">folD</name>
    <name type="ordered locus">FTM_0480</name>
</gene>
<proteinExistence type="inferred from homology"/>
<accession>B2SF67</accession>
<name>FOLD_FRATM</name>
<reference key="1">
    <citation type="journal article" date="2009" name="PLoS Pathog.">
        <title>Molecular evolutionary consequences of niche restriction in Francisella tularensis, a facultative intracellular pathogen.</title>
        <authorList>
            <person name="Larsson P."/>
            <person name="Elfsmark D."/>
            <person name="Svensson K."/>
            <person name="Wikstroem P."/>
            <person name="Forsman M."/>
            <person name="Brettin T."/>
            <person name="Keim P."/>
            <person name="Johansson A."/>
        </authorList>
    </citation>
    <scope>NUCLEOTIDE SEQUENCE [LARGE SCALE GENOMIC DNA]</scope>
    <source>
        <strain>FSC147</strain>
    </source>
</reference>
<evidence type="ECO:0000255" key="1">
    <source>
        <dbReference type="HAMAP-Rule" id="MF_01576"/>
    </source>
</evidence>
<sequence length="282" mass="30526">MILIDGKSLSKDLKERLVTQVQEYKHHTAITPKLVAIIVGNDPASKTYVDSKEKACAQVGIDSQVITLPEHTTESELLELIDQLNNDSSVHAILVQLPLPAHINKNNVIYSIKPEKDVDGFHPTNVGRLQLRDKKCLESCTPKGIMTMLREYGIKTEGAYAVVVGASNVVGKPVSQLLLNAKATVTTCHRFTTDLKSHTTKADILIVAVGKPNFITADMVKEGAVVIDVGINHVDGKIVGDVDFAAVKDKVAAITPVPGGVGPMTITELLYNTFQCAQELNR</sequence>
<organism>
    <name type="scientific">Francisella tularensis subsp. mediasiatica (strain FSC147)</name>
    <dbReference type="NCBI Taxonomy" id="441952"/>
    <lineage>
        <taxon>Bacteria</taxon>
        <taxon>Pseudomonadati</taxon>
        <taxon>Pseudomonadota</taxon>
        <taxon>Gammaproteobacteria</taxon>
        <taxon>Thiotrichales</taxon>
        <taxon>Francisellaceae</taxon>
        <taxon>Francisella</taxon>
    </lineage>
</organism>
<dbReference type="EC" id="1.5.1.5" evidence="1"/>
<dbReference type="EC" id="3.5.4.9" evidence="1"/>
<dbReference type="EMBL" id="CP000915">
    <property type="protein sequence ID" value="ACD30499.1"/>
    <property type="molecule type" value="Genomic_DNA"/>
</dbReference>
<dbReference type="SMR" id="B2SF67"/>
<dbReference type="KEGG" id="ftm:FTM_0480"/>
<dbReference type="HOGENOM" id="CLU_034045_2_1_6"/>
<dbReference type="UniPathway" id="UPA00193"/>
<dbReference type="GO" id="GO:0005829">
    <property type="term" value="C:cytosol"/>
    <property type="evidence" value="ECO:0007669"/>
    <property type="project" value="TreeGrafter"/>
</dbReference>
<dbReference type="GO" id="GO:0004477">
    <property type="term" value="F:methenyltetrahydrofolate cyclohydrolase activity"/>
    <property type="evidence" value="ECO:0007669"/>
    <property type="project" value="UniProtKB-UniRule"/>
</dbReference>
<dbReference type="GO" id="GO:0004488">
    <property type="term" value="F:methylenetetrahydrofolate dehydrogenase (NADP+) activity"/>
    <property type="evidence" value="ECO:0007669"/>
    <property type="project" value="UniProtKB-UniRule"/>
</dbReference>
<dbReference type="GO" id="GO:0000105">
    <property type="term" value="P:L-histidine biosynthetic process"/>
    <property type="evidence" value="ECO:0007669"/>
    <property type="project" value="UniProtKB-KW"/>
</dbReference>
<dbReference type="GO" id="GO:0009086">
    <property type="term" value="P:methionine biosynthetic process"/>
    <property type="evidence" value="ECO:0007669"/>
    <property type="project" value="UniProtKB-KW"/>
</dbReference>
<dbReference type="GO" id="GO:0006164">
    <property type="term" value="P:purine nucleotide biosynthetic process"/>
    <property type="evidence" value="ECO:0007669"/>
    <property type="project" value="UniProtKB-KW"/>
</dbReference>
<dbReference type="GO" id="GO:0035999">
    <property type="term" value="P:tetrahydrofolate interconversion"/>
    <property type="evidence" value="ECO:0007669"/>
    <property type="project" value="UniProtKB-UniRule"/>
</dbReference>
<dbReference type="CDD" id="cd01080">
    <property type="entry name" value="NAD_bind_m-THF_DH_Cyclohyd"/>
    <property type="match status" value="1"/>
</dbReference>
<dbReference type="FunFam" id="3.40.50.720:FF:000094">
    <property type="entry name" value="Bifunctional protein FolD"/>
    <property type="match status" value="1"/>
</dbReference>
<dbReference type="FunFam" id="3.40.50.10860:FF:000005">
    <property type="entry name" value="C-1-tetrahydrofolate synthase, cytoplasmic, putative"/>
    <property type="match status" value="1"/>
</dbReference>
<dbReference type="Gene3D" id="3.40.50.10860">
    <property type="entry name" value="Leucine Dehydrogenase, chain A, domain 1"/>
    <property type="match status" value="1"/>
</dbReference>
<dbReference type="Gene3D" id="3.40.50.720">
    <property type="entry name" value="NAD(P)-binding Rossmann-like Domain"/>
    <property type="match status" value="1"/>
</dbReference>
<dbReference type="HAMAP" id="MF_01576">
    <property type="entry name" value="THF_DHG_CYH"/>
    <property type="match status" value="1"/>
</dbReference>
<dbReference type="InterPro" id="IPR046346">
    <property type="entry name" value="Aminoacid_DH-like_N_sf"/>
</dbReference>
<dbReference type="InterPro" id="IPR036291">
    <property type="entry name" value="NAD(P)-bd_dom_sf"/>
</dbReference>
<dbReference type="InterPro" id="IPR000672">
    <property type="entry name" value="THF_DH/CycHdrlase"/>
</dbReference>
<dbReference type="InterPro" id="IPR020630">
    <property type="entry name" value="THF_DH/CycHdrlase_cat_dom"/>
</dbReference>
<dbReference type="InterPro" id="IPR020867">
    <property type="entry name" value="THF_DH/CycHdrlase_CS"/>
</dbReference>
<dbReference type="InterPro" id="IPR020631">
    <property type="entry name" value="THF_DH/CycHdrlase_NAD-bd_dom"/>
</dbReference>
<dbReference type="NCBIfam" id="NF008058">
    <property type="entry name" value="PRK10792.1"/>
    <property type="match status" value="1"/>
</dbReference>
<dbReference type="NCBIfam" id="NF010777">
    <property type="entry name" value="PRK14180.1"/>
    <property type="match status" value="1"/>
</dbReference>
<dbReference type="NCBIfam" id="NF010783">
    <property type="entry name" value="PRK14186.1"/>
    <property type="match status" value="1"/>
</dbReference>
<dbReference type="PANTHER" id="PTHR48099:SF5">
    <property type="entry name" value="C-1-TETRAHYDROFOLATE SYNTHASE, CYTOPLASMIC"/>
    <property type="match status" value="1"/>
</dbReference>
<dbReference type="PANTHER" id="PTHR48099">
    <property type="entry name" value="C-1-TETRAHYDROFOLATE SYNTHASE, CYTOPLASMIC-RELATED"/>
    <property type="match status" value="1"/>
</dbReference>
<dbReference type="Pfam" id="PF00763">
    <property type="entry name" value="THF_DHG_CYH"/>
    <property type="match status" value="1"/>
</dbReference>
<dbReference type="Pfam" id="PF02882">
    <property type="entry name" value="THF_DHG_CYH_C"/>
    <property type="match status" value="1"/>
</dbReference>
<dbReference type="PRINTS" id="PR00085">
    <property type="entry name" value="THFDHDRGNASE"/>
</dbReference>
<dbReference type="SUPFAM" id="SSF53223">
    <property type="entry name" value="Aminoacid dehydrogenase-like, N-terminal domain"/>
    <property type="match status" value="1"/>
</dbReference>
<dbReference type="SUPFAM" id="SSF51735">
    <property type="entry name" value="NAD(P)-binding Rossmann-fold domains"/>
    <property type="match status" value="1"/>
</dbReference>
<dbReference type="PROSITE" id="PS00766">
    <property type="entry name" value="THF_DHG_CYH_1"/>
    <property type="match status" value="1"/>
</dbReference>
<dbReference type="PROSITE" id="PS00767">
    <property type="entry name" value="THF_DHG_CYH_2"/>
    <property type="match status" value="1"/>
</dbReference>